<geneLocation type="chloroplast"/>
<organism>
    <name type="scientific">Huperzia lucidula</name>
    <name type="common">Shining clubmoss</name>
    <name type="synonym">Lycopodium lucidulum</name>
    <dbReference type="NCBI Taxonomy" id="37429"/>
    <lineage>
        <taxon>Eukaryota</taxon>
        <taxon>Viridiplantae</taxon>
        <taxon>Streptophyta</taxon>
        <taxon>Embryophyta</taxon>
        <taxon>Tracheophyta</taxon>
        <taxon>Lycopodiopsida</taxon>
        <taxon>Lycopodiales</taxon>
        <taxon>Lycopodiaceae</taxon>
        <taxon>Huperzioideae</taxon>
        <taxon>Huperzia</taxon>
    </lineage>
</organism>
<feature type="chain" id="PRO_0000362839" description="NAD(P)H-quinone oxidoreductase subunit 3, chloroplastic">
    <location>
        <begin position="1"/>
        <end position="120"/>
    </location>
</feature>
<feature type="transmembrane region" description="Helical" evidence="1">
    <location>
        <begin position="9"/>
        <end position="29"/>
    </location>
</feature>
<feature type="transmembrane region" description="Helical" evidence="1">
    <location>
        <begin position="64"/>
        <end position="84"/>
    </location>
</feature>
<feature type="transmembrane region" description="Helical" evidence="1">
    <location>
        <begin position="89"/>
        <end position="109"/>
    </location>
</feature>
<sequence>MFLISKYNYFWLFLLLASLIPPVASPISSYSAPVGKGPEKFTSYESGIEPIGDAWIQFQIRYYMFASVFVISDAETVSLYPWAMCFNELGVPASAEASISVTIPIVGSVYAWRRGASEWS</sequence>
<gene>
    <name evidence="1" type="primary">ndhC</name>
</gene>
<reference key="1">
    <citation type="journal article" date="2005" name="Gene">
        <title>The first complete chloroplast genome sequence of a lycophyte, Huperzia lucidula (Lycopodiaceae).</title>
        <authorList>
            <person name="Wolf P.G."/>
            <person name="Karol K.G."/>
            <person name="Mandoli D.F."/>
            <person name="Kuehl J.V."/>
            <person name="Arumuganathan K."/>
            <person name="Ellis M.W."/>
            <person name="Mishler B.D."/>
            <person name="Kelch D.G."/>
            <person name="Olmstead R.G."/>
            <person name="Boore J.L."/>
        </authorList>
    </citation>
    <scope>NUCLEOTIDE SEQUENCE [LARGE SCALE GENOMIC DNA]</scope>
</reference>
<evidence type="ECO:0000255" key="1">
    <source>
        <dbReference type="HAMAP-Rule" id="MF_01394"/>
    </source>
</evidence>
<proteinExistence type="inferred from homology"/>
<accession>Q5SD04</accession>
<dbReference type="EC" id="7.1.1.-" evidence="1"/>
<dbReference type="EMBL" id="AY660566">
    <property type="protein sequence ID" value="AAT80720.1"/>
    <property type="molecule type" value="Genomic_DNA"/>
</dbReference>
<dbReference type="RefSeq" id="YP_209524.1">
    <property type="nucleotide sequence ID" value="NC_006861.1"/>
</dbReference>
<dbReference type="SMR" id="Q5SD04"/>
<dbReference type="GeneID" id="3283790"/>
<dbReference type="GO" id="GO:0009535">
    <property type="term" value="C:chloroplast thylakoid membrane"/>
    <property type="evidence" value="ECO:0007669"/>
    <property type="project" value="UniProtKB-SubCell"/>
</dbReference>
<dbReference type="GO" id="GO:0030964">
    <property type="term" value="C:NADH dehydrogenase complex"/>
    <property type="evidence" value="ECO:0007669"/>
    <property type="project" value="TreeGrafter"/>
</dbReference>
<dbReference type="GO" id="GO:0008137">
    <property type="term" value="F:NADH dehydrogenase (ubiquinone) activity"/>
    <property type="evidence" value="ECO:0007669"/>
    <property type="project" value="InterPro"/>
</dbReference>
<dbReference type="GO" id="GO:0048038">
    <property type="term" value="F:quinone binding"/>
    <property type="evidence" value="ECO:0007669"/>
    <property type="project" value="UniProtKB-KW"/>
</dbReference>
<dbReference type="GO" id="GO:0019684">
    <property type="term" value="P:photosynthesis, light reaction"/>
    <property type="evidence" value="ECO:0007669"/>
    <property type="project" value="UniProtKB-UniRule"/>
</dbReference>
<dbReference type="Gene3D" id="1.20.58.1610">
    <property type="entry name" value="NADH:ubiquinone/plastoquinone oxidoreductase, chain 3"/>
    <property type="match status" value="1"/>
</dbReference>
<dbReference type="HAMAP" id="MF_01394">
    <property type="entry name" value="NDH1_NuoA"/>
    <property type="match status" value="1"/>
</dbReference>
<dbReference type="InterPro" id="IPR023043">
    <property type="entry name" value="NAD(P)H_OxRDtase_bac/plastid"/>
</dbReference>
<dbReference type="InterPro" id="IPR000440">
    <property type="entry name" value="NADH_UbQ/plastoQ_OxRdtase_su3"/>
</dbReference>
<dbReference type="InterPro" id="IPR038430">
    <property type="entry name" value="NDAH_ubi_oxred_su3_sf"/>
</dbReference>
<dbReference type="PANTHER" id="PTHR11058">
    <property type="entry name" value="NADH-UBIQUINONE OXIDOREDUCTASE CHAIN 3"/>
    <property type="match status" value="1"/>
</dbReference>
<dbReference type="PANTHER" id="PTHR11058:SF9">
    <property type="entry name" value="NADH-UBIQUINONE OXIDOREDUCTASE CHAIN 3"/>
    <property type="match status" value="1"/>
</dbReference>
<dbReference type="Pfam" id="PF00507">
    <property type="entry name" value="Oxidored_q4"/>
    <property type="match status" value="1"/>
</dbReference>
<name>NU3C_HUPLU</name>
<protein>
    <recommendedName>
        <fullName evidence="1">NAD(P)H-quinone oxidoreductase subunit 3, chloroplastic</fullName>
        <ecNumber evidence="1">7.1.1.-</ecNumber>
    </recommendedName>
    <alternativeName>
        <fullName evidence="1">NAD(P)H dehydrogenase subunit 3</fullName>
    </alternativeName>
    <alternativeName>
        <fullName evidence="1">NADH-plastoquinone oxidoreductase subunit 3</fullName>
    </alternativeName>
</protein>
<comment type="function">
    <text evidence="1">NDH shuttles electrons from NAD(P)H:plastoquinone, via FMN and iron-sulfur (Fe-S) centers, to quinones in the photosynthetic chain and possibly in a chloroplast respiratory chain. The immediate electron acceptor for the enzyme in this species is believed to be plastoquinone. Couples the redox reaction to proton translocation, and thus conserves the redox energy in a proton gradient.</text>
</comment>
<comment type="catalytic activity">
    <reaction evidence="1">
        <text>a plastoquinone + NADH + (n+1) H(+)(in) = a plastoquinol + NAD(+) + n H(+)(out)</text>
        <dbReference type="Rhea" id="RHEA:42608"/>
        <dbReference type="Rhea" id="RHEA-COMP:9561"/>
        <dbReference type="Rhea" id="RHEA-COMP:9562"/>
        <dbReference type="ChEBI" id="CHEBI:15378"/>
        <dbReference type="ChEBI" id="CHEBI:17757"/>
        <dbReference type="ChEBI" id="CHEBI:57540"/>
        <dbReference type="ChEBI" id="CHEBI:57945"/>
        <dbReference type="ChEBI" id="CHEBI:62192"/>
    </reaction>
</comment>
<comment type="catalytic activity">
    <reaction evidence="1">
        <text>a plastoquinone + NADPH + (n+1) H(+)(in) = a plastoquinol + NADP(+) + n H(+)(out)</text>
        <dbReference type="Rhea" id="RHEA:42612"/>
        <dbReference type="Rhea" id="RHEA-COMP:9561"/>
        <dbReference type="Rhea" id="RHEA-COMP:9562"/>
        <dbReference type="ChEBI" id="CHEBI:15378"/>
        <dbReference type="ChEBI" id="CHEBI:17757"/>
        <dbReference type="ChEBI" id="CHEBI:57783"/>
        <dbReference type="ChEBI" id="CHEBI:58349"/>
        <dbReference type="ChEBI" id="CHEBI:62192"/>
    </reaction>
</comment>
<comment type="subunit">
    <text evidence="1">NDH is composed of at least 16 different subunits, 5 of which are encoded in the nucleus.</text>
</comment>
<comment type="subcellular location">
    <subcellularLocation>
        <location evidence="1">Plastid</location>
        <location evidence="1">Chloroplast thylakoid membrane</location>
        <topology evidence="1">Multi-pass membrane protein</topology>
    </subcellularLocation>
</comment>
<comment type="similarity">
    <text evidence="1">Belongs to the complex I subunit 3 family.</text>
</comment>
<keyword id="KW-0150">Chloroplast</keyword>
<keyword id="KW-0472">Membrane</keyword>
<keyword id="KW-0520">NAD</keyword>
<keyword id="KW-0521">NADP</keyword>
<keyword id="KW-0934">Plastid</keyword>
<keyword id="KW-0618">Plastoquinone</keyword>
<keyword id="KW-0874">Quinone</keyword>
<keyword id="KW-0793">Thylakoid</keyword>
<keyword id="KW-1278">Translocase</keyword>
<keyword id="KW-0812">Transmembrane</keyword>
<keyword id="KW-1133">Transmembrane helix</keyword>
<keyword id="KW-0813">Transport</keyword>